<proteinExistence type="inferred from homology"/>
<comment type="function">
    <text evidence="2">Catalyzes the formation of N(7)-methylguanine at position 46 (m7G46) in tRNA.</text>
</comment>
<comment type="catalytic activity">
    <reaction evidence="2">
        <text>guanosine(46) in tRNA + S-adenosyl-L-methionine = N(7)-methylguanosine(46) in tRNA + S-adenosyl-L-homocysteine</text>
        <dbReference type="Rhea" id="RHEA:42708"/>
        <dbReference type="Rhea" id="RHEA-COMP:10188"/>
        <dbReference type="Rhea" id="RHEA-COMP:10189"/>
        <dbReference type="ChEBI" id="CHEBI:57856"/>
        <dbReference type="ChEBI" id="CHEBI:59789"/>
        <dbReference type="ChEBI" id="CHEBI:74269"/>
        <dbReference type="ChEBI" id="CHEBI:74480"/>
        <dbReference type="EC" id="2.1.1.33"/>
    </reaction>
</comment>
<comment type="pathway">
    <text evidence="2">tRNA modification; N(7)-methylguanine-tRNA biosynthesis.</text>
</comment>
<comment type="similarity">
    <text evidence="2">Belongs to the class I-like SAM-binding methyltransferase superfamily. TrmB family.</text>
</comment>
<organism>
    <name type="scientific">Nitrosomonas eutropha (strain DSM 101675 / C91 / Nm57)</name>
    <dbReference type="NCBI Taxonomy" id="335283"/>
    <lineage>
        <taxon>Bacteria</taxon>
        <taxon>Pseudomonadati</taxon>
        <taxon>Pseudomonadota</taxon>
        <taxon>Betaproteobacteria</taxon>
        <taxon>Nitrosomonadales</taxon>
        <taxon>Nitrosomonadaceae</taxon>
        <taxon>Nitrosomonas</taxon>
    </lineage>
</organism>
<sequence>MSSHPPIRSYVLRQGYFSHAQRHAYESLLPRYGIPFSENPIDLDSIFGRTAPKILEIGSGMGETTVEIAAQHPEKDFVAIEVHAPGIGSLLDRIEKHGLTNLRIIPHDAKLVLQHMLTGESLDGIHIFFPDPWPKARHHKRRLIQSDFVSLLCNRLKPGGYLHIATDWEDYAIHSLHVLSSEQRLINTAADYAPRPAYRPLTKFEQRGMKLGHTIRDLIFTKAA</sequence>
<reference key="1">
    <citation type="journal article" date="2007" name="Environ. Microbiol.">
        <title>Whole-genome analysis of the ammonia-oxidizing bacterium, Nitrosomonas eutropha C91: implications for niche adaptation.</title>
        <authorList>
            <person name="Stein L.Y."/>
            <person name="Arp D.J."/>
            <person name="Berube P.M."/>
            <person name="Chain P.S."/>
            <person name="Hauser L."/>
            <person name="Jetten M.S."/>
            <person name="Klotz M.G."/>
            <person name="Larimer F.W."/>
            <person name="Norton J.M."/>
            <person name="Op den Camp H.J.M."/>
            <person name="Shin M."/>
            <person name="Wei X."/>
        </authorList>
    </citation>
    <scope>NUCLEOTIDE SEQUENCE [LARGE SCALE GENOMIC DNA]</scope>
    <source>
        <strain>DSM 101675 / C91 / Nm57</strain>
    </source>
</reference>
<name>TRMB_NITEC</name>
<evidence type="ECO:0000250" key="1"/>
<evidence type="ECO:0000255" key="2">
    <source>
        <dbReference type="HAMAP-Rule" id="MF_01057"/>
    </source>
</evidence>
<keyword id="KW-0489">Methyltransferase</keyword>
<keyword id="KW-0949">S-adenosyl-L-methionine</keyword>
<keyword id="KW-0808">Transferase</keyword>
<keyword id="KW-0819">tRNA processing</keyword>
<accession>Q0AJ68</accession>
<protein>
    <recommendedName>
        <fullName evidence="2">tRNA (guanine-N(7)-)-methyltransferase</fullName>
        <ecNumber evidence="2">2.1.1.33</ecNumber>
    </recommendedName>
    <alternativeName>
        <fullName evidence="2">tRNA (guanine(46)-N(7))-methyltransferase</fullName>
    </alternativeName>
    <alternativeName>
        <fullName evidence="2">tRNA(m7G46)-methyltransferase</fullName>
    </alternativeName>
</protein>
<dbReference type="EC" id="2.1.1.33" evidence="2"/>
<dbReference type="EMBL" id="CP000450">
    <property type="protein sequence ID" value="ABI58603.1"/>
    <property type="molecule type" value="Genomic_DNA"/>
</dbReference>
<dbReference type="RefSeq" id="WP_011633446.1">
    <property type="nucleotide sequence ID" value="NC_008344.1"/>
</dbReference>
<dbReference type="SMR" id="Q0AJ68"/>
<dbReference type="STRING" id="335283.Neut_0322"/>
<dbReference type="KEGG" id="net:Neut_0322"/>
<dbReference type="eggNOG" id="COG0220">
    <property type="taxonomic scope" value="Bacteria"/>
</dbReference>
<dbReference type="HOGENOM" id="CLU_050910_0_1_4"/>
<dbReference type="OrthoDB" id="9802090at2"/>
<dbReference type="UniPathway" id="UPA00989"/>
<dbReference type="Proteomes" id="UP000001966">
    <property type="component" value="Chromosome"/>
</dbReference>
<dbReference type="GO" id="GO:0043527">
    <property type="term" value="C:tRNA methyltransferase complex"/>
    <property type="evidence" value="ECO:0007669"/>
    <property type="project" value="TreeGrafter"/>
</dbReference>
<dbReference type="GO" id="GO:0008176">
    <property type="term" value="F:tRNA (guanine(46)-N7)-methyltransferase activity"/>
    <property type="evidence" value="ECO:0007669"/>
    <property type="project" value="UniProtKB-UniRule"/>
</dbReference>
<dbReference type="CDD" id="cd02440">
    <property type="entry name" value="AdoMet_MTases"/>
    <property type="match status" value="1"/>
</dbReference>
<dbReference type="FunFam" id="3.40.50.150:FF:000035">
    <property type="entry name" value="tRNA (guanine-N(7)-)-methyltransferase"/>
    <property type="match status" value="1"/>
</dbReference>
<dbReference type="Gene3D" id="3.40.50.150">
    <property type="entry name" value="Vaccinia Virus protein VP39"/>
    <property type="match status" value="1"/>
</dbReference>
<dbReference type="HAMAP" id="MF_01057">
    <property type="entry name" value="tRNA_methyltr_TrmB"/>
    <property type="match status" value="1"/>
</dbReference>
<dbReference type="InterPro" id="IPR029063">
    <property type="entry name" value="SAM-dependent_MTases_sf"/>
</dbReference>
<dbReference type="InterPro" id="IPR003358">
    <property type="entry name" value="tRNA_(Gua-N-7)_MeTrfase_Trmb"/>
</dbReference>
<dbReference type="InterPro" id="IPR055361">
    <property type="entry name" value="tRNA_methyltr_TrmB_bact"/>
</dbReference>
<dbReference type="NCBIfam" id="TIGR00091">
    <property type="entry name" value="tRNA (guanosine(46)-N7)-methyltransferase TrmB"/>
    <property type="match status" value="1"/>
</dbReference>
<dbReference type="PANTHER" id="PTHR23417">
    <property type="entry name" value="3-DEOXY-D-MANNO-OCTULOSONIC-ACID TRANSFERASE/TRNA GUANINE-N 7 - -METHYLTRANSFERASE"/>
    <property type="match status" value="1"/>
</dbReference>
<dbReference type="PANTHER" id="PTHR23417:SF14">
    <property type="entry name" value="PENTACOTRIPEPTIDE-REPEAT REGION OF PRORP DOMAIN-CONTAINING PROTEIN"/>
    <property type="match status" value="1"/>
</dbReference>
<dbReference type="Pfam" id="PF02390">
    <property type="entry name" value="Methyltransf_4"/>
    <property type="match status" value="1"/>
</dbReference>
<dbReference type="SUPFAM" id="SSF53335">
    <property type="entry name" value="S-adenosyl-L-methionine-dependent methyltransferases"/>
    <property type="match status" value="1"/>
</dbReference>
<dbReference type="PROSITE" id="PS51625">
    <property type="entry name" value="SAM_MT_TRMB"/>
    <property type="match status" value="1"/>
</dbReference>
<gene>
    <name evidence="2" type="primary">trmB</name>
    <name type="ordered locus">Neut_0322</name>
</gene>
<feature type="chain" id="PRO_0000288190" description="tRNA (guanine-N(7)-)-methyltransferase">
    <location>
        <begin position="1"/>
        <end position="224"/>
    </location>
</feature>
<feature type="active site" evidence="1">
    <location>
        <position position="131"/>
    </location>
</feature>
<feature type="binding site" evidence="2">
    <location>
        <position position="56"/>
    </location>
    <ligand>
        <name>S-adenosyl-L-methionine</name>
        <dbReference type="ChEBI" id="CHEBI:59789"/>
    </ligand>
</feature>
<feature type="binding site" evidence="2">
    <location>
        <position position="81"/>
    </location>
    <ligand>
        <name>S-adenosyl-L-methionine</name>
        <dbReference type="ChEBI" id="CHEBI:59789"/>
    </ligand>
</feature>
<feature type="binding site" evidence="2">
    <location>
        <position position="108"/>
    </location>
    <ligand>
        <name>S-adenosyl-L-methionine</name>
        <dbReference type="ChEBI" id="CHEBI:59789"/>
    </ligand>
</feature>
<feature type="binding site" evidence="2">
    <location>
        <position position="131"/>
    </location>
    <ligand>
        <name>S-adenosyl-L-methionine</name>
        <dbReference type="ChEBI" id="CHEBI:59789"/>
    </ligand>
</feature>
<feature type="binding site" evidence="2">
    <location>
        <position position="135"/>
    </location>
    <ligand>
        <name>substrate</name>
    </ligand>
</feature>
<feature type="binding site" evidence="2">
    <location>
        <position position="167"/>
    </location>
    <ligand>
        <name>substrate</name>
    </ligand>
</feature>
<feature type="binding site" evidence="2">
    <location>
        <begin position="202"/>
        <end position="205"/>
    </location>
    <ligand>
        <name>substrate</name>
    </ligand>
</feature>